<keyword id="KW-0067">ATP-binding</keyword>
<keyword id="KW-0460">Magnesium</keyword>
<keyword id="KW-0464">Manganese</keyword>
<keyword id="KW-0479">Metal-binding</keyword>
<keyword id="KW-0507">mRNA processing</keyword>
<keyword id="KW-0547">Nucleotide-binding</keyword>
<keyword id="KW-0548">Nucleotidyltransferase</keyword>
<keyword id="KW-0539">Nucleus</keyword>
<keyword id="KW-1185">Reference proteome</keyword>
<keyword id="KW-0694">RNA-binding</keyword>
<keyword id="KW-0808">Transferase</keyword>
<keyword id="KW-0862">Zinc</keyword>
<keyword id="KW-0863">Zinc-finger</keyword>
<proteinExistence type="evidence at transcript level"/>
<evidence type="ECO:0000250" key="1">
    <source>
        <dbReference type="UniProtKB" id="Q9H6E5"/>
    </source>
</evidence>
<evidence type="ECO:0000250" key="2">
    <source>
        <dbReference type="UniProtKB" id="Q9NVV4"/>
    </source>
</evidence>
<evidence type="ECO:0000255" key="3"/>
<evidence type="ECO:0000255" key="4">
    <source>
        <dbReference type="PROSITE-ProRule" id="PRU00130"/>
    </source>
</evidence>
<evidence type="ECO:0000255" key="5">
    <source>
        <dbReference type="PROSITE-ProRule" id="PRU00176"/>
    </source>
</evidence>
<evidence type="ECO:0000256" key="6">
    <source>
        <dbReference type="SAM" id="MobiDB-lite"/>
    </source>
</evidence>
<evidence type="ECO:0000305" key="7"/>
<organism>
    <name type="scientific">Danio rerio</name>
    <name type="common">Zebrafish</name>
    <name type="synonym">Brachydanio rerio</name>
    <dbReference type="NCBI Taxonomy" id="7955"/>
    <lineage>
        <taxon>Eukaryota</taxon>
        <taxon>Metazoa</taxon>
        <taxon>Chordata</taxon>
        <taxon>Craniata</taxon>
        <taxon>Vertebrata</taxon>
        <taxon>Euteleostomi</taxon>
        <taxon>Actinopterygii</taxon>
        <taxon>Neopterygii</taxon>
        <taxon>Teleostei</taxon>
        <taxon>Ostariophysi</taxon>
        <taxon>Cypriniformes</taxon>
        <taxon>Danionidae</taxon>
        <taxon>Danioninae</taxon>
        <taxon>Danio</taxon>
    </lineage>
</organism>
<protein>
    <recommendedName>
        <fullName>Speckle targeted PIP5K1A-regulated poly(A) polymerase</fullName>
        <shortName>Star-PAP</shortName>
        <ecNumber evidence="1">2.7.7.19</ecNumber>
    </recommendedName>
    <alternativeName>
        <fullName>RNA-binding motif protein 21</fullName>
        <shortName>RNA-binding protein 21</shortName>
    </alternativeName>
    <alternativeName>
        <fullName>U6 snRNA-specific terminal uridylyltransferase 1</fullName>
        <shortName>U6-TUTase</shortName>
        <ecNumber evidence="1">2.7.7.52</ecNumber>
    </alternativeName>
</protein>
<comment type="function">
    <text evidence="1">Poly(A) polymerase that creates the 3'-poly(A) tail of specific pre-mRNAs. In addition to polyadenylation, it is also required for the 3'-end cleavage of pre-mRNAs: binds to the 3'UTR of targeted pre-mRNAs and promotes the recruitment and assembly of the CPSF complex on the 3'UTR of pre-mRNAs. In addition to adenylyltransferase activity, also has uridylyltransferase activity. However, the ATP ratio is higher than UTP in cells, suggesting that it functions primarily as a poly(A) polymerase.</text>
</comment>
<comment type="catalytic activity">
    <reaction evidence="1">
        <text>RNA(n) + UTP = RNA(n)-3'-uridine ribonucleotide + diphosphate</text>
        <dbReference type="Rhea" id="RHEA:14785"/>
        <dbReference type="Rhea" id="RHEA-COMP:14527"/>
        <dbReference type="Rhea" id="RHEA-COMP:17348"/>
        <dbReference type="ChEBI" id="CHEBI:33019"/>
        <dbReference type="ChEBI" id="CHEBI:46398"/>
        <dbReference type="ChEBI" id="CHEBI:140395"/>
        <dbReference type="ChEBI" id="CHEBI:173116"/>
        <dbReference type="EC" id="2.7.7.52"/>
    </reaction>
</comment>
<comment type="catalytic activity">
    <reaction evidence="1">
        <text>RNA(n) + ATP = RNA(n)-3'-adenine ribonucleotide + diphosphate</text>
        <dbReference type="Rhea" id="RHEA:11332"/>
        <dbReference type="Rhea" id="RHEA-COMP:14527"/>
        <dbReference type="Rhea" id="RHEA-COMP:17347"/>
        <dbReference type="ChEBI" id="CHEBI:30616"/>
        <dbReference type="ChEBI" id="CHEBI:33019"/>
        <dbReference type="ChEBI" id="CHEBI:140395"/>
        <dbReference type="ChEBI" id="CHEBI:173115"/>
        <dbReference type="EC" id="2.7.7.19"/>
    </reaction>
</comment>
<comment type="cofactor">
    <cofactor evidence="1">
        <name>Mg(2+)</name>
        <dbReference type="ChEBI" id="CHEBI:18420"/>
    </cofactor>
    <cofactor evidence="2">
        <name>Mn(2+)</name>
        <dbReference type="ChEBI" id="CHEBI:29035"/>
    </cofactor>
    <text evidence="1">Binds 1 divalent cation per subunit.</text>
</comment>
<comment type="subunit">
    <text evidence="1">Associates with the cleavage and polyadenylation specificity factor (CPSF) complex.</text>
</comment>
<comment type="subcellular location">
    <subcellularLocation>
        <location evidence="1">Nucleus</location>
        <location evidence="1">Nucleolus</location>
    </subcellularLocation>
    <subcellularLocation>
        <location evidence="1">Nucleus speckle</location>
    </subcellularLocation>
</comment>
<comment type="domain">
    <text evidence="1">The zinc-finger domain is required for terminal uridylyltransferase activity. Together with the RRM domain, binds the 5'-area of U6 snRNA.</text>
</comment>
<comment type="domain">
    <text evidence="1">The RRM domain is required for terminal uridylyltransferase activity. Together with the zinc-finger domain, binds the 5'-area of U6 snRNA.</text>
</comment>
<comment type="similarity">
    <text evidence="7">Belongs to the DNA polymerase type-B-like family.</text>
</comment>
<sequence>MELDKDIQTTQKGFHCNLCHVNIPNRPSLEDHVKGKKHLHLLRLRAQRKTQEENSVFVSGFKADTSQTELKEYFQQFGLVTDVIMDKQKGVYAIVEFSESQDVQTTLAQPQHQLNGLKLRVKPREKKEFKLASRGKQDCKNTLISLDKLNFELCKAMSVNEQIQKVVESLELKDNEKKVRDLLVQLLQEVFTEFFPDCQIVPFGSSVNTFGLHSCDLDLFLDLENTKVFQARAKSSEQTGENQSEDCRSEDSILSDIDLSTASPAEILELVAVILRKCVPGVHKVQALSTARLPVVKFSHKELNLQGDITINNRLAVRNTKFLQLCSGIDSRLRPLVYTIRLWAKQKQLAGNLSGPGPLLNNYALTLLVIFFLQNRDPPVLPSVNQLKNMACEEEECAIEEWDCTFPSQPFSVPPSKNTEDLCTLLFGFFTFYSKFDFPASVVSLRDGHVLPITDFLKSDMEALKTADASSPKPKRSSAPRLGPMNVLDPFELNHNVAGNLNERTQKNFKRECCEAEKYCRSLQYQRKSAKGKSWGLVRLFAPQSEAAASSQPRAEKVLEVSVPFKPASLPESLRAQLASAGKDFRGLWFAEVCSAVQKVFNEILQCSPTEETQSLDKTDKSGSEMEVNNNRSLEDTNIQVKGEAGKKRPLSVEEGPSTFTITQAKRQRLDVDLEHPEPLHWTWTQRSRVWAGRRKVRRDLLKTSDEASKPEGGCVDMESRVTQSIVEKEEKLHDALEFKVDAEVVGGNESTKVVLRFHPSIDTAGVFQDFFHFLESFLPKMAETIMGRAEDITDMS</sequence>
<name>STPAP_DANRE</name>
<reference key="1">
    <citation type="submission" date="2005-07" db="EMBL/GenBank/DDBJ databases">
        <authorList>
            <consortium name="NIH - Zebrafish Gene Collection (ZGC) project"/>
        </authorList>
    </citation>
    <scope>NUCLEOTIDE SEQUENCE [LARGE SCALE MRNA]</scope>
    <source>
        <tissue>Ovary</tissue>
    </source>
</reference>
<gene>
    <name type="primary">tut1</name>
    <name type="synonym">rbm21</name>
    <name type="ORF">zgc:112254</name>
</gene>
<feature type="chain" id="PRO_0000404590" description="Speckle targeted PIP5K1A-regulated poly(A) polymerase">
    <location>
        <begin position="1"/>
        <end position="797"/>
    </location>
</feature>
<feature type="domain" description="RRM" evidence="5">
    <location>
        <begin position="54"/>
        <end position="126"/>
    </location>
</feature>
<feature type="domain" description="PAP-associated" evidence="3">
    <location>
        <begin position="421"/>
        <end position="495"/>
    </location>
</feature>
<feature type="zinc finger region" description="Matrin-type" evidence="4">
    <location>
        <begin position="14"/>
        <end position="44"/>
    </location>
</feature>
<feature type="region of interest" description="KA1; binds the bulging loops of U6 snRNA but is dispensable for terminal uridylyltransferase activity" evidence="1">
    <location>
        <begin position="544"/>
        <end position="787"/>
    </location>
</feature>
<feature type="region of interest" description="Disordered" evidence="6">
    <location>
        <begin position="611"/>
        <end position="659"/>
    </location>
</feature>
<feature type="compositionally biased region" description="Basic and acidic residues" evidence="6">
    <location>
        <begin position="615"/>
        <end position="624"/>
    </location>
</feature>
<feature type="compositionally biased region" description="Polar residues" evidence="6">
    <location>
        <begin position="627"/>
        <end position="640"/>
    </location>
</feature>
<feature type="binding site" evidence="1">
    <location>
        <position position="205"/>
    </location>
    <ligand>
        <name>ATP</name>
        <dbReference type="ChEBI" id="CHEBI:30616"/>
    </ligand>
</feature>
<feature type="binding site" evidence="1">
    <location>
        <position position="216"/>
    </location>
    <ligand>
        <name>Mg(2+)</name>
        <dbReference type="ChEBI" id="CHEBI:18420"/>
        <note>catalytic</note>
    </ligand>
</feature>
<feature type="binding site" evidence="1">
    <location>
        <position position="216"/>
    </location>
    <ligand>
        <name>UTP</name>
        <dbReference type="ChEBI" id="CHEBI:46398"/>
    </ligand>
</feature>
<feature type="binding site" evidence="1">
    <location>
        <position position="218"/>
    </location>
    <ligand>
        <name>Mg(2+)</name>
        <dbReference type="ChEBI" id="CHEBI:18420"/>
        <note>catalytic</note>
    </ligand>
</feature>
<feature type="binding site" evidence="1">
    <location>
        <position position="218"/>
    </location>
    <ligand>
        <name>UTP</name>
        <dbReference type="ChEBI" id="CHEBI:46398"/>
    </ligand>
</feature>
<feature type="binding site" evidence="1">
    <location>
        <position position="319"/>
    </location>
    <ligand>
        <name>ATP</name>
        <dbReference type="ChEBI" id="CHEBI:30616"/>
    </ligand>
</feature>
<feature type="binding site" evidence="1">
    <location>
        <position position="319"/>
    </location>
    <ligand>
        <name>UTP</name>
        <dbReference type="ChEBI" id="CHEBI:46398"/>
    </ligand>
</feature>
<feature type="binding site" evidence="1">
    <location>
        <position position="341"/>
    </location>
    <ligand>
        <name>UTP</name>
        <dbReference type="ChEBI" id="CHEBI:46398"/>
    </ligand>
</feature>
<feature type="binding site" evidence="1">
    <location>
        <position position="363"/>
    </location>
    <ligand>
        <name>UTP</name>
        <dbReference type="ChEBI" id="CHEBI:46398"/>
    </ligand>
</feature>
<feature type="binding site" evidence="1">
    <location>
        <position position="495"/>
    </location>
    <ligand>
        <name>UTP</name>
        <dbReference type="ChEBI" id="CHEBI:46398"/>
    </ligand>
</feature>
<dbReference type="EC" id="2.7.7.19" evidence="1"/>
<dbReference type="EC" id="2.7.7.52" evidence="1"/>
<dbReference type="EMBL" id="BC098614">
    <property type="protein sequence ID" value="AAH98614.1"/>
    <property type="molecule type" value="mRNA"/>
</dbReference>
<dbReference type="RefSeq" id="NP_001025359.1">
    <property type="nucleotide sequence ID" value="NM_001030188.1"/>
</dbReference>
<dbReference type="SMR" id="Q4KMD7"/>
<dbReference type="FunCoup" id="Q4KMD7">
    <property type="interactions" value="1089"/>
</dbReference>
<dbReference type="STRING" id="7955.ENSDARP00000074395"/>
<dbReference type="PaxDb" id="7955-ENSDARP00000074395"/>
<dbReference type="GeneID" id="564388"/>
<dbReference type="KEGG" id="dre:564388"/>
<dbReference type="AGR" id="ZFIN:ZDB-GENE-050706-68"/>
<dbReference type="CTD" id="64852"/>
<dbReference type="ZFIN" id="ZDB-GENE-050706-68">
    <property type="gene designation" value="tut1"/>
</dbReference>
<dbReference type="eggNOG" id="KOG2277">
    <property type="taxonomic scope" value="Eukaryota"/>
</dbReference>
<dbReference type="InParanoid" id="Q4KMD7"/>
<dbReference type="OrthoDB" id="2274644at2759"/>
<dbReference type="PhylomeDB" id="Q4KMD7"/>
<dbReference type="PRO" id="PR:Q4KMD7"/>
<dbReference type="Proteomes" id="UP000000437">
    <property type="component" value="Chromosome 12"/>
</dbReference>
<dbReference type="GO" id="GO:0005847">
    <property type="term" value="C:mRNA cleavage and polyadenylation specificity factor complex"/>
    <property type="evidence" value="ECO:0000250"/>
    <property type="project" value="UniProtKB"/>
</dbReference>
<dbReference type="GO" id="GO:0016607">
    <property type="term" value="C:nuclear speck"/>
    <property type="evidence" value="ECO:0000250"/>
    <property type="project" value="UniProtKB"/>
</dbReference>
<dbReference type="GO" id="GO:0005730">
    <property type="term" value="C:nucleolus"/>
    <property type="evidence" value="ECO:0000250"/>
    <property type="project" value="UniProtKB"/>
</dbReference>
<dbReference type="GO" id="GO:0005524">
    <property type="term" value="F:ATP binding"/>
    <property type="evidence" value="ECO:0007669"/>
    <property type="project" value="UniProtKB-KW"/>
</dbReference>
<dbReference type="GO" id="GO:0140767">
    <property type="term" value="F:enzyme-substrate adaptor activity"/>
    <property type="evidence" value="ECO:0000250"/>
    <property type="project" value="UniProtKB"/>
</dbReference>
<dbReference type="GO" id="GO:0003730">
    <property type="term" value="F:mRNA 3'-UTR binding"/>
    <property type="evidence" value="ECO:0000250"/>
    <property type="project" value="UniProtKB"/>
</dbReference>
<dbReference type="GO" id="GO:1990817">
    <property type="term" value="F:poly(A) RNA polymerase activity"/>
    <property type="evidence" value="ECO:0000250"/>
    <property type="project" value="UniProtKB"/>
</dbReference>
<dbReference type="GO" id="GO:0003723">
    <property type="term" value="F:RNA binding"/>
    <property type="evidence" value="ECO:0000250"/>
    <property type="project" value="UniProtKB"/>
</dbReference>
<dbReference type="GO" id="GO:0050265">
    <property type="term" value="F:RNA uridylyltransferase activity"/>
    <property type="evidence" value="ECO:0000250"/>
    <property type="project" value="UniProtKB"/>
</dbReference>
<dbReference type="GO" id="GO:0008270">
    <property type="term" value="F:zinc ion binding"/>
    <property type="evidence" value="ECO:0007669"/>
    <property type="project" value="UniProtKB-KW"/>
</dbReference>
<dbReference type="GO" id="GO:0180010">
    <property type="term" value="P:co-transcriptional mRNA 3'-end processing, cleavage and polyadenylation pathway"/>
    <property type="evidence" value="ECO:0000250"/>
    <property type="project" value="UniProtKB"/>
</dbReference>
<dbReference type="GO" id="GO:0031123">
    <property type="term" value="P:RNA 3'-end processing"/>
    <property type="evidence" value="ECO:0000318"/>
    <property type="project" value="GO_Central"/>
</dbReference>
<dbReference type="GO" id="GO:0016180">
    <property type="term" value="P:snRNA processing"/>
    <property type="evidence" value="ECO:0000250"/>
    <property type="project" value="UniProtKB"/>
</dbReference>
<dbReference type="CDD" id="cd05402">
    <property type="entry name" value="NT_PAP_TUTase"/>
    <property type="match status" value="1"/>
</dbReference>
<dbReference type="CDD" id="cd12279">
    <property type="entry name" value="RRM_TUT1"/>
    <property type="match status" value="1"/>
</dbReference>
<dbReference type="FunFam" id="1.10.1410.10:FF:000008">
    <property type="entry name" value="speckle targeted PIP5K1A-regulated poly(A) polymerase"/>
    <property type="match status" value="1"/>
</dbReference>
<dbReference type="FunFam" id="3.30.70.330:FF:000305">
    <property type="entry name" value="speckle targeted PIP5K1A-regulated poly(A) polymerase"/>
    <property type="match status" value="1"/>
</dbReference>
<dbReference type="Gene3D" id="1.10.1410.10">
    <property type="match status" value="1"/>
</dbReference>
<dbReference type="Gene3D" id="3.30.70.330">
    <property type="match status" value="1"/>
</dbReference>
<dbReference type="Gene3D" id="3.30.460.10">
    <property type="entry name" value="Beta Polymerase, domain 2"/>
    <property type="match status" value="1"/>
</dbReference>
<dbReference type="InterPro" id="IPR003604">
    <property type="entry name" value="Matrin/U1-like-C_Znf_C2H2"/>
</dbReference>
<dbReference type="InterPro" id="IPR054708">
    <property type="entry name" value="MTPAP-like_central"/>
</dbReference>
<dbReference type="InterPro" id="IPR043519">
    <property type="entry name" value="NT_sf"/>
</dbReference>
<dbReference type="InterPro" id="IPR012677">
    <property type="entry name" value="Nucleotide-bd_a/b_plait_sf"/>
</dbReference>
<dbReference type="InterPro" id="IPR002058">
    <property type="entry name" value="PAP_assoc"/>
</dbReference>
<dbReference type="InterPro" id="IPR035979">
    <property type="entry name" value="RBD_domain_sf"/>
</dbReference>
<dbReference type="InterPro" id="IPR000504">
    <property type="entry name" value="RRM_dom"/>
</dbReference>
<dbReference type="InterPro" id="IPR034388">
    <property type="entry name" value="Star-PAP_RRM"/>
</dbReference>
<dbReference type="InterPro" id="IPR013087">
    <property type="entry name" value="Znf_C2H2_type"/>
</dbReference>
<dbReference type="PANTHER" id="PTHR12271">
    <property type="entry name" value="POLY A POLYMERASE CID PAP -RELATED"/>
    <property type="match status" value="1"/>
</dbReference>
<dbReference type="PANTHER" id="PTHR12271:SF127">
    <property type="entry name" value="SPECKLE TARGETED PIP5K1A-REGULATED POLY(A) POLYMERASE"/>
    <property type="match status" value="1"/>
</dbReference>
<dbReference type="Pfam" id="PF22600">
    <property type="entry name" value="MTPAP-like_central"/>
    <property type="match status" value="1"/>
</dbReference>
<dbReference type="Pfam" id="PF03828">
    <property type="entry name" value="PAP_assoc"/>
    <property type="match status" value="1"/>
</dbReference>
<dbReference type="Pfam" id="PF23085">
    <property type="entry name" value="RRM_PARP14_3"/>
    <property type="match status" value="1"/>
</dbReference>
<dbReference type="Pfam" id="PF12874">
    <property type="entry name" value="zf-met"/>
    <property type="match status" value="1"/>
</dbReference>
<dbReference type="SMART" id="SM00360">
    <property type="entry name" value="RRM"/>
    <property type="match status" value="1"/>
</dbReference>
<dbReference type="SMART" id="SM00451">
    <property type="entry name" value="ZnF_U1"/>
    <property type="match status" value="1"/>
</dbReference>
<dbReference type="SUPFAM" id="SSF81301">
    <property type="entry name" value="Nucleotidyltransferase"/>
    <property type="match status" value="1"/>
</dbReference>
<dbReference type="SUPFAM" id="SSF81631">
    <property type="entry name" value="PAP/OAS1 substrate-binding domain"/>
    <property type="match status" value="1"/>
</dbReference>
<dbReference type="SUPFAM" id="SSF54928">
    <property type="entry name" value="RNA-binding domain, RBD"/>
    <property type="match status" value="1"/>
</dbReference>
<dbReference type="PROSITE" id="PS50102">
    <property type="entry name" value="RRM"/>
    <property type="match status" value="1"/>
</dbReference>
<dbReference type="PROSITE" id="PS00028">
    <property type="entry name" value="ZINC_FINGER_C2H2_1"/>
    <property type="match status" value="1"/>
</dbReference>
<accession>Q4KMD7</accession>